<comment type="function">
    <text evidence="1">Murein-degrading enzyme. May play a role in recycling of muropeptides during cell elongation and/or cell division.</text>
</comment>
<comment type="catalytic activity">
    <reaction evidence="1">
        <text>Exolytic cleavage of the (1-&gt;4)-beta-glycosidic linkage between N-acetylmuramic acid (MurNAc) and N-acetylglucosamine (GlcNAc) residues in peptidoglycan, from either the reducing or the non-reducing ends of the peptidoglycan chains, with concomitant formation of a 1,6-anhydrobond in the MurNAc residue.</text>
        <dbReference type="EC" id="4.2.2.n1"/>
    </reaction>
</comment>
<comment type="subcellular location">
    <subcellularLocation>
        <location evidence="1">Cell outer membrane</location>
        <topology evidence="1">Lipid-anchor</topology>
    </subcellularLocation>
</comment>
<comment type="similarity">
    <text evidence="1">Belongs to the transglycosylase Slt family.</text>
</comment>
<comment type="sequence caution" evidence="2">
    <conflict type="erroneous initiation">
        <sequence resource="EMBL-CDS" id="AAZ89812"/>
    </conflict>
</comment>
<name>MLTC_SHISS</name>
<proteinExistence type="inferred from homology"/>
<reference key="1">
    <citation type="journal article" date="2005" name="Nucleic Acids Res.">
        <title>Genome dynamics and diversity of Shigella species, the etiologic agents of bacillary dysentery.</title>
        <authorList>
            <person name="Yang F."/>
            <person name="Yang J."/>
            <person name="Zhang X."/>
            <person name="Chen L."/>
            <person name="Jiang Y."/>
            <person name="Yan Y."/>
            <person name="Tang X."/>
            <person name="Wang J."/>
            <person name="Xiong Z."/>
            <person name="Dong J."/>
            <person name="Xue Y."/>
            <person name="Zhu Y."/>
            <person name="Xu X."/>
            <person name="Sun L."/>
            <person name="Chen S."/>
            <person name="Nie H."/>
            <person name="Peng J."/>
            <person name="Xu J."/>
            <person name="Wang Y."/>
            <person name="Yuan Z."/>
            <person name="Wen Y."/>
            <person name="Yao Z."/>
            <person name="Shen Y."/>
            <person name="Qiang B."/>
            <person name="Hou Y."/>
            <person name="Yu J."/>
            <person name="Jin Q."/>
        </authorList>
    </citation>
    <scope>NUCLEOTIDE SEQUENCE [LARGE SCALE GENOMIC DNA]</scope>
    <source>
        <strain>Ss046</strain>
    </source>
</reference>
<dbReference type="EC" id="4.2.2.n1" evidence="1"/>
<dbReference type="EMBL" id="CP000038">
    <property type="protein sequence ID" value="AAZ89812.1"/>
    <property type="status" value="ALT_INIT"/>
    <property type="molecule type" value="Genomic_DNA"/>
</dbReference>
<dbReference type="RefSeq" id="WP_005155224.1">
    <property type="nucleotide sequence ID" value="NC_007384.1"/>
</dbReference>
<dbReference type="SMR" id="Q3YXF0"/>
<dbReference type="CAZy" id="GH23">
    <property type="family name" value="Glycoside Hydrolase Family 23"/>
</dbReference>
<dbReference type="KEGG" id="ssn:SSON_3233"/>
<dbReference type="HOGENOM" id="CLU_044583_0_0_6"/>
<dbReference type="Proteomes" id="UP000002529">
    <property type="component" value="Chromosome"/>
</dbReference>
<dbReference type="GO" id="GO:0009279">
    <property type="term" value="C:cell outer membrane"/>
    <property type="evidence" value="ECO:0007669"/>
    <property type="project" value="UniProtKB-SubCell"/>
</dbReference>
<dbReference type="GO" id="GO:0016798">
    <property type="term" value="F:hydrolase activity, acting on glycosyl bonds"/>
    <property type="evidence" value="ECO:0007669"/>
    <property type="project" value="InterPro"/>
</dbReference>
<dbReference type="GO" id="GO:0008933">
    <property type="term" value="F:peptidoglycan lytic transglycosylase activity"/>
    <property type="evidence" value="ECO:0007669"/>
    <property type="project" value="UniProtKB-UniRule"/>
</dbReference>
<dbReference type="GO" id="GO:0016998">
    <property type="term" value="P:cell wall macromolecule catabolic process"/>
    <property type="evidence" value="ECO:0007669"/>
    <property type="project" value="UniProtKB-UniRule"/>
</dbReference>
<dbReference type="GO" id="GO:0071555">
    <property type="term" value="P:cell wall organization"/>
    <property type="evidence" value="ECO:0007669"/>
    <property type="project" value="UniProtKB-KW"/>
</dbReference>
<dbReference type="GO" id="GO:0000270">
    <property type="term" value="P:peptidoglycan metabolic process"/>
    <property type="evidence" value="ECO:0007669"/>
    <property type="project" value="InterPro"/>
</dbReference>
<dbReference type="CDD" id="cd16893">
    <property type="entry name" value="LT_MltC_MltE"/>
    <property type="match status" value="1"/>
</dbReference>
<dbReference type="FunFam" id="1.10.530.10:FF:000002">
    <property type="entry name" value="Membrane-bound lytic murein transglycosylase C"/>
    <property type="match status" value="1"/>
</dbReference>
<dbReference type="Gene3D" id="1.10.530.10">
    <property type="match status" value="1"/>
</dbReference>
<dbReference type="HAMAP" id="MF_01616">
    <property type="entry name" value="MltC"/>
    <property type="match status" value="1"/>
</dbReference>
<dbReference type="InterPro" id="IPR023346">
    <property type="entry name" value="Lysozyme-like_dom_sf"/>
</dbReference>
<dbReference type="InterPro" id="IPR023664">
    <property type="entry name" value="Murein_transglycosylaseC"/>
</dbReference>
<dbReference type="InterPro" id="IPR024570">
    <property type="entry name" value="Murein_transglycosylaseC_N"/>
</dbReference>
<dbReference type="InterPro" id="IPR000189">
    <property type="entry name" value="Transglyc_AS"/>
</dbReference>
<dbReference type="InterPro" id="IPR008258">
    <property type="entry name" value="Transglycosylase_SLT_dom_1"/>
</dbReference>
<dbReference type="NCBIfam" id="NF008670">
    <property type="entry name" value="PRK11671.1"/>
    <property type="match status" value="1"/>
</dbReference>
<dbReference type="PANTHER" id="PTHR37423:SF2">
    <property type="entry name" value="MEMBRANE-BOUND LYTIC MUREIN TRANSGLYCOSYLASE C"/>
    <property type="match status" value="1"/>
</dbReference>
<dbReference type="PANTHER" id="PTHR37423">
    <property type="entry name" value="SOLUBLE LYTIC MUREIN TRANSGLYCOSYLASE-RELATED"/>
    <property type="match status" value="1"/>
</dbReference>
<dbReference type="Pfam" id="PF11873">
    <property type="entry name" value="Mltc_N"/>
    <property type="match status" value="1"/>
</dbReference>
<dbReference type="Pfam" id="PF01464">
    <property type="entry name" value="SLT"/>
    <property type="match status" value="1"/>
</dbReference>
<dbReference type="SUPFAM" id="SSF53955">
    <property type="entry name" value="Lysozyme-like"/>
    <property type="match status" value="1"/>
</dbReference>
<dbReference type="PROSITE" id="PS51257">
    <property type="entry name" value="PROKAR_LIPOPROTEIN"/>
    <property type="match status" value="1"/>
</dbReference>
<dbReference type="PROSITE" id="PS00922">
    <property type="entry name" value="TRANSGLYCOSYLASE"/>
    <property type="match status" value="1"/>
</dbReference>
<protein>
    <recommendedName>
        <fullName evidence="1">Membrane-bound lytic murein transglycosylase C</fullName>
        <ecNumber evidence="1">4.2.2.n1</ecNumber>
    </recommendedName>
    <alternativeName>
        <fullName evidence="1">Murein lyase C</fullName>
    </alternativeName>
</protein>
<evidence type="ECO:0000255" key="1">
    <source>
        <dbReference type="HAMAP-Rule" id="MF_01616"/>
    </source>
</evidence>
<evidence type="ECO:0000305" key="2"/>
<gene>
    <name evidence="1" type="primary">mltC</name>
    <name type="ordered locus">SSON_3233</name>
</gene>
<accession>Q3YXF0</accession>
<sequence length="359" mass="40170">MKKYLALALIAPLLISCSTTKKGDTYNEAWVKDTNGFDILMGQFAHNIENIWGFKEVVIAGPKDYVKYTDQYQTRSHINFDDGTITIETIAGTEPAAHLRRAIIKTLLMGDDPSSVDLYSDVDDITISKEPFLYGQVVDNTGQPIRWEGRASNFADYLLKNRLQSRSNGLRIIYSVTINMVPNHLDKRAHKYLGMVRQASRKYGVDESLILAIMQTESSFNPYAVSRSDALGLMQVVQHTAGKDVFRSQGKSGTPSRSFLFDPASNIDTGTAYLAMLNNVYLDGIDNPTSRRYAVITAYNGGAGSVLRVFSNDKIQAANIINTMTPGDVYQTLTTRHPSAESRRYLYKVNTAQKSYRRR</sequence>
<keyword id="KW-0998">Cell outer membrane</keyword>
<keyword id="KW-0961">Cell wall biogenesis/degradation</keyword>
<keyword id="KW-0449">Lipoprotein</keyword>
<keyword id="KW-0456">Lyase</keyword>
<keyword id="KW-0472">Membrane</keyword>
<keyword id="KW-0564">Palmitate</keyword>
<keyword id="KW-1185">Reference proteome</keyword>
<keyword id="KW-0732">Signal</keyword>
<organism>
    <name type="scientific">Shigella sonnei (strain Ss046)</name>
    <dbReference type="NCBI Taxonomy" id="300269"/>
    <lineage>
        <taxon>Bacteria</taxon>
        <taxon>Pseudomonadati</taxon>
        <taxon>Pseudomonadota</taxon>
        <taxon>Gammaproteobacteria</taxon>
        <taxon>Enterobacterales</taxon>
        <taxon>Enterobacteriaceae</taxon>
        <taxon>Shigella</taxon>
    </lineage>
</organism>
<feature type="signal peptide" evidence="1">
    <location>
        <begin position="1"/>
        <end position="16"/>
    </location>
</feature>
<feature type="chain" id="PRO_0000335590" description="Membrane-bound lytic murein transglycosylase C">
    <location>
        <begin position="17"/>
        <end position="359"/>
    </location>
</feature>
<feature type="lipid moiety-binding region" description="N-palmitoyl cysteine" evidence="1">
    <location>
        <position position="17"/>
    </location>
</feature>
<feature type="lipid moiety-binding region" description="S-diacylglycerol cysteine" evidence="1">
    <location>
        <position position="17"/>
    </location>
</feature>